<organism>
    <name type="scientific">Bacillus subtilis (strain 168)</name>
    <dbReference type="NCBI Taxonomy" id="224308"/>
    <lineage>
        <taxon>Bacteria</taxon>
        <taxon>Bacillati</taxon>
        <taxon>Bacillota</taxon>
        <taxon>Bacilli</taxon>
        <taxon>Bacillales</taxon>
        <taxon>Bacillaceae</taxon>
        <taxon>Bacillus</taxon>
    </lineage>
</organism>
<evidence type="ECO:0000269" key="1">
    <source>
    </source>
</evidence>
<evidence type="ECO:0000269" key="2">
    <source>
    </source>
</evidence>
<evidence type="ECO:0000305" key="3"/>
<gene>
    <name type="primary">flgB</name>
    <name type="ordered locus">BSU16180</name>
</gene>
<accession>P24500</accession>
<dbReference type="EMBL" id="M54965">
    <property type="protein sequence ID" value="AAA22441.1"/>
    <property type="molecule type" value="Genomic_DNA"/>
</dbReference>
<dbReference type="EMBL" id="AL009126">
    <property type="protein sequence ID" value="CAB13491.1"/>
    <property type="molecule type" value="Genomic_DNA"/>
</dbReference>
<dbReference type="PIR" id="JG0019">
    <property type="entry name" value="JG0019"/>
</dbReference>
<dbReference type="RefSeq" id="NP_389500.1">
    <property type="nucleotide sequence ID" value="NC_000964.3"/>
</dbReference>
<dbReference type="RefSeq" id="WP_003245656.1">
    <property type="nucleotide sequence ID" value="NZ_OZ025638.1"/>
</dbReference>
<dbReference type="SMR" id="P24500"/>
<dbReference type="FunCoup" id="P24500">
    <property type="interactions" value="101"/>
</dbReference>
<dbReference type="STRING" id="224308.BSU16180"/>
<dbReference type="PaxDb" id="224308-BSU16180"/>
<dbReference type="EnsemblBacteria" id="CAB13491">
    <property type="protein sequence ID" value="CAB13491"/>
    <property type="gene ID" value="BSU_16180"/>
</dbReference>
<dbReference type="GeneID" id="938149"/>
<dbReference type="KEGG" id="bsu:BSU16180"/>
<dbReference type="PATRIC" id="fig|224308.179.peg.1758"/>
<dbReference type="eggNOG" id="COG1815">
    <property type="taxonomic scope" value="Bacteria"/>
</dbReference>
<dbReference type="InParanoid" id="P24500"/>
<dbReference type="OrthoDB" id="9792068at2"/>
<dbReference type="PhylomeDB" id="P24500"/>
<dbReference type="BioCyc" id="BSUB:BSU16180-MONOMER"/>
<dbReference type="Proteomes" id="UP000001570">
    <property type="component" value="Chromosome"/>
</dbReference>
<dbReference type="GO" id="GO:0009288">
    <property type="term" value="C:bacterial-type flagellum"/>
    <property type="evidence" value="ECO:0000318"/>
    <property type="project" value="GO_Central"/>
</dbReference>
<dbReference type="GO" id="GO:0030694">
    <property type="term" value="C:bacterial-type flagellum basal body, rod"/>
    <property type="evidence" value="ECO:0007669"/>
    <property type="project" value="InterPro"/>
</dbReference>
<dbReference type="GO" id="GO:0044780">
    <property type="term" value="P:bacterial-type flagellum assembly"/>
    <property type="evidence" value="ECO:0000315"/>
    <property type="project" value="CACAO"/>
</dbReference>
<dbReference type="GO" id="GO:0071978">
    <property type="term" value="P:bacterial-type flagellum-dependent swarming motility"/>
    <property type="evidence" value="ECO:0000315"/>
    <property type="project" value="CACAO"/>
</dbReference>
<dbReference type="InterPro" id="IPR001444">
    <property type="entry name" value="Flag_bb_rod_N"/>
</dbReference>
<dbReference type="InterPro" id="IPR019776">
    <property type="entry name" value="Flagellar_basal_body_rod_CS"/>
</dbReference>
<dbReference type="InterPro" id="IPR006300">
    <property type="entry name" value="FlgB"/>
</dbReference>
<dbReference type="NCBIfam" id="TIGR01396">
    <property type="entry name" value="FlgB"/>
    <property type="match status" value="1"/>
</dbReference>
<dbReference type="PANTHER" id="PTHR30435:SF12">
    <property type="entry name" value="FLAGELLAR BASAL BODY ROD PROTEIN FLGB"/>
    <property type="match status" value="1"/>
</dbReference>
<dbReference type="PANTHER" id="PTHR30435">
    <property type="entry name" value="FLAGELLAR PROTEIN"/>
    <property type="match status" value="1"/>
</dbReference>
<dbReference type="Pfam" id="PF00460">
    <property type="entry name" value="Flg_bb_rod"/>
    <property type="match status" value="1"/>
</dbReference>
<dbReference type="PIRSF" id="PIRSF002889">
    <property type="entry name" value="Rod_FlgB"/>
    <property type="match status" value="1"/>
</dbReference>
<dbReference type="PROSITE" id="PS00588">
    <property type="entry name" value="FLAGELLA_BB_ROD"/>
    <property type="match status" value="1"/>
</dbReference>
<sequence>MSLFSGTIQNLENALSRADIKQKVITNNIANIDTPNYKAKKVSFQNLLDQESSRLEAIKTDYRHVDFSDTDSNYSIVASGDTSYQQNGNNVDVDKEMTELAQNQINYQALVERMNGKFNSLKTVLTGGK</sequence>
<protein>
    <recommendedName>
        <fullName>Flagellar basal body rod protein FlgB</fullName>
    </recommendedName>
</protein>
<feature type="initiator methionine" description="Removed" evidence="2">
    <location>
        <position position="1"/>
    </location>
</feature>
<feature type="chain" id="PRO_0000180784" description="Flagellar basal body rod protein FlgB">
    <location>
        <begin position="2"/>
        <end position="129"/>
    </location>
</feature>
<proteinExistence type="evidence at protein level"/>
<keyword id="KW-0975">Bacterial flagellum</keyword>
<keyword id="KW-0903">Direct protein sequencing</keyword>
<keyword id="KW-1185">Reference proteome</keyword>
<reference key="1">
    <citation type="journal article" date="1991" name="Gene">
        <title>Gene-protein relationships in the flagellar hook-basal body complex of Bacillus subtilis: sequences of the flgB, flgC, flgG, fliE and fliF genes.</title>
        <authorList>
            <person name="Zuberi A.R."/>
            <person name="Ying C."/>
            <person name="Bischoff D.S."/>
            <person name="Ordal G.W."/>
        </authorList>
    </citation>
    <scope>NUCLEOTIDE SEQUENCE [GENOMIC DNA]</scope>
</reference>
<reference key="2">
    <citation type="journal article" date="1997" name="Nature">
        <title>The complete genome sequence of the Gram-positive bacterium Bacillus subtilis.</title>
        <authorList>
            <person name="Kunst F."/>
            <person name="Ogasawara N."/>
            <person name="Moszer I."/>
            <person name="Albertini A.M."/>
            <person name="Alloni G."/>
            <person name="Azevedo V."/>
            <person name="Bertero M.G."/>
            <person name="Bessieres P."/>
            <person name="Bolotin A."/>
            <person name="Borchert S."/>
            <person name="Borriss R."/>
            <person name="Boursier L."/>
            <person name="Brans A."/>
            <person name="Braun M."/>
            <person name="Brignell S.C."/>
            <person name="Bron S."/>
            <person name="Brouillet S."/>
            <person name="Bruschi C.V."/>
            <person name="Caldwell B."/>
            <person name="Capuano V."/>
            <person name="Carter N.M."/>
            <person name="Choi S.-K."/>
            <person name="Codani J.-J."/>
            <person name="Connerton I.F."/>
            <person name="Cummings N.J."/>
            <person name="Daniel R.A."/>
            <person name="Denizot F."/>
            <person name="Devine K.M."/>
            <person name="Duesterhoeft A."/>
            <person name="Ehrlich S.D."/>
            <person name="Emmerson P.T."/>
            <person name="Entian K.-D."/>
            <person name="Errington J."/>
            <person name="Fabret C."/>
            <person name="Ferrari E."/>
            <person name="Foulger D."/>
            <person name="Fritz C."/>
            <person name="Fujita M."/>
            <person name="Fujita Y."/>
            <person name="Fuma S."/>
            <person name="Galizzi A."/>
            <person name="Galleron N."/>
            <person name="Ghim S.-Y."/>
            <person name="Glaser P."/>
            <person name="Goffeau A."/>
            <person name="Golightly E.J."/>
            <person name="Grandi G."/>
            <person name="Guiseppi G."/>
            <person name="Guy B.J."/>
            <person name="Haga K."/>
            <person name="Haiech J."/>
            <person name="Harwood C.R."/>
            <person name="Henaut A."/>
            <person name="Hilbert H."/>
            <person name="Holsappel S."/>
            <person name="Hosono S."/>
            <person name="Hullo M.-F."/>
            <person name="Itaya M."/>
            <person name="Jones L.-M."/>
            <person name="Joris B."/>
            <person name="Karamata D."/>
            <person name="Kasahara Y."/>
            <person name="Klaerr-Blanchard M."/>
            <person name="Klein C."/>
            <person name="Kobayashi Y."/>
            <person name="Koetter P."/>
            <person name="Koningstein G."/>
            <person name="Krogh S."/>
            <person name="Kumano M."/>
            <person name="Kurita K."/>
            <person name="Lapidus A."/>
            <person name="Lardinois S."/>
            <person name="Lauber J."/>
            <person name="Lazarevic V."/>
            <person name="Lee S.-M."/>
            <person name="Levine A."/>
            <person name="Liu H."/>
            <person name="Masuda S."/>
            <person name="Mauel C."/>
            <person name="Medigue C."/>
            <person name="Medina N."/>
            <person name="Mellado R.P."/>
            <person name="Mizuno M."/>
            <person name="Moestl D."/>
            <person name="Nakai S."/>
            <person name="Noback M."/>
            <person name="Noone D."/>
            <person name="O'Reilly M."/>
            <person name="Ogawa K."/>
            <person name="Ogiwara A."/>
            <person name="Oudega B."/>
            <person name="Park S.-H."/>
            <person name="Parro V."/>
            <person name="Pohl T.M."/>
            <person name="Portetelle D."/>
            <person name="Porwollik S."/>
            <person name="Prescott A.M."/>
            <person name="Presecan E."/>
            <person name="Pujic P."/>
            <person name="Purnelle B."/>
            <person name="Rapoport G."/>
            <person name="Rey M."/>
            <person name="Reynolds S."/>
            <person name="Rieger M."/>
            <person name="Rivolta C."/>
            <person name="Rocha E."/>
            <person name="Roche B."/>
            <person name="Rose M."/>
            <person name="Sadaie Y."/>
            <person name="Sato T."/>
            <person name="Scanlan E."/>
            <person name="Schleich S."/>
            <person name="Schroeter R."/>
            <person name="Scoffone F."/>
            <person name="Sekiguchi J."/>
            <person name="Sekowska A."/>
            <person name="Seror S.J."/>
            <person name="Serror P."/>
            <person name="Shin B.-S."/>
            <person name="Soldo B."/>
            <person name="Sorokin A."/>
            <person name="Tacconi E."/>
            <person name="Takagi T."/>
            <person name="Takahashi H."/>
            <person name="Takemaru K."/>
            <person name="Takeuchi M."/>
            <person name="Tamakoshi A."/>
            <person name="Tanaka T."/>
            <person name="Terpstra P."/>
            <person name="Tognoni A."/>
            <person name="Tosato V."/>
            <person name="Uchiyama S."/>
            <person name="Vandenbol M."/>
            <person name="Vannier F."/>
            <person name="Vassarotti A."/>
            <person name="Viari A."/>
            <person name="Wambutt R."/>
            <person name="Wedler E."/>
            <person name="Wedler H."/>
            <person name="Weitzenegger T."/>
            <person name="Winters P."/>
            <person name="Wipat A."/>
            <person name="Yamamoto H."/>
            <person name="Yamane K."/>
            <person name="Yasumoto K."/>
            <person name="Yata K."/>
            <person name="Yoshida K."/>
            <person name="Yoshikawa H.-F."/>
            <person name="Zumstein E."/>
            <person name="Yoshikawa H."/>
            <person name="Danchin A."/>
        </authorList>
    </citation>
    <scope>NUCLEOTIDE SEQUENCE [LARGE SCALE GENOMIC DNA]</scope>
    <source>
        <strain>168</strain>
    </source>
</reference>
<reference key="3">
    <citation type="journal article" date="1997" name="Mol. Microbiol.">
        <title>Purification and characterization of the flagellar hook-basal body complex of Bacillus subtilis.</title>
        <authorList>
            <person name="Kubori T."/>
            <person name="Okumura M."/>
            <person name="Kobayashi N."/>
            <person name="Nakamura D."/>
            <person name="Iwakura M."/>
            <person name="Aizawa S.I."/>
        </authorList>
    </citation>
    <scope>PROTEIN SEQUENCE OF 2-11</scope>
    <scope>FUNCTION</scope>
    <scope>SUBUNIT</scope>
    <scope>SUBCELLULAR LOCATION</scope>
    <source>
        <strain>168 / OI1085</strain>
    </source>
</reference>
<reference key="4">
    <citation type="journal article" date="2003" name="J. Bacteriol.">
        <title>Electrophoretic mobility of Bacillus subtilis knockout mutants with and without flagella.</title>
        <authorList>
            <person name="Okuda S."/>
            <person name="Igarashi R."/>
            <person name="Kusui Y."/>
            <person name="Kasahara Y."/>
            <person name="Morisaki H."/>
        </authorList>
    </citation>
    <scope>DISRUPTION PHENOTYPE</scope>
    <source>
        <strain>168</strain>
    </source>
</reference>
<name>FLGB_BACSU</name>
<comment type="function">
    <text evidence="2">Structural component of flagellum, the bacterial motility apparatus. Part of the rod structure of flagellar basal body.</text>
</comment>
<comment type="subunit">
    <text evidence="2">The basal body constitutes a major portion of the flagellar organelle and consists of a number of rings mounted on a central rod. In Gram-negative bacteria, at least four rings, L, P, S and M are present, whereas Gram-positive bacteria lack the L and P rings. The rod consists of about 26 subunits of FlgG in the distal portion, and FlgB, FlgC and FlgF build up the proximal portion of the rod with about 6 subunits each. Rod assembly occurs by export via the flagellum-specific pathway of its constituent proteins and by their incorporation into the rod structure in the probable order of FlgB, FlgC, FlgF and FlgG. Another protein, FliE, also assembles onto the stable rod structure.</text>
</comment>
<comment type="subcellular location">
    <subcellularLocation>
        <location evidence="2">Bacterial flagellum basal body</location>
    </subcellularLocation>
</comment>
<comment type="disruption phenotype">
    <text evidence="1">Lack flagella. Altered cell surface properties including greater softness and lower density of the charged groups in the polymer layer.</text>
</comment>
<comment type="similarity">
    <text evidence="3">Belongs to the flagella basal body rod proteins family.</text>
</comment>